<proteinExistence type="inferred from homology"/>
<accession>P0DTS6</accession>
<protein>
    <recommendedName>
        <fullName>Apolipoprotein A-V</fullName>
        <shortName>Apo-AV</shortName>
        <shortName>ApoA-V</shortName>
    </recommendedName>
    <alternativeName>
        <fullName>Apolipoprotein A5</fullName>
    </alternativeName>
</protein>
<keyword id="KW-0162">Chylomicron</keyword>
<keyword id="KW-0175">Coiled coil</keyword>
<keyword id="KW-0967">Endosome</keyword>
<keyword id="KW-0333">Golgi apparatus</keyword>
<keyword id="KW-0345">HDL</keyword>
<keyword id="KW-0445">Lipid transport</keyword>
<keyword id="KW-0597">Phosphoprotein</keyword>
<keyword id="KW-1185">Reference proteome</keyword>
<keyword id="KW-0964">Secreted</keyword>
<keyword id="KW-0732">Signal</keyword>
<keyword id="KW-0813">Transport</keyword>
<keyword id="KW-0850">VLDL</keyword>
<feature type="signal peptide" evidence="3">
    <location>
        <begin position="1"/>
        <end position="20"/>
    </location>
</feature>
<feature type="chain" id="PRO_5015471205" description="Apolipoprotein A-V">
    <location>
        <begin position="21"/>
        <end position="367"/>
    </location>
</feature>
<feature type="region of interest" description="Disordered" evidence="4">
    <location>
        <begin position="71"/>
        <end position="90"/>
    </location>
</feature>
<feature type="modified residue" description="Phosphoserine" evidence="1">
    <location>
        <position position="56"/>
    </location>
</feature>
<reference key="1">
    <citation type="submission" date="2013-04" db="EMBL/GenBank/DDBJ databases">
        <authorList>
            <person name="Di Palma F."/>
            <person name="Alfoldi J."/>
            <person name="Johnson J."/>
            <person name="Berlin A."/>
            <person name="Gnerre S."/>
            <person name="Jaffe D."/>
            <person name="MacCallum I."/>
            <person name="Young S."/>
            <person name="Walker B.J."/>
            <person name="Lindblad-Toh K."/>
        </authorList>
    </citation>
    <scope>NUCLEOTIDE SEQUENCE [LARGE SCALE GENOMIC DNA]</scope>
    <source>
        <tissue>Liver</tissue>
    </source>
</reference>
<reference key="2">
    <citation type="unpublished observations" date="2019-10">
        <authorList>
            <person name="Puppione D.L."/>
        </authorList>
    </citation>
    <scope>IDENTIFICATION</scope>
</reference>
<sequence length="367" mass="41115">MVAVLTWALALLSAFATVQTQKGFWDYFSQSSGDKSKVARVQQQKLTWEPTSLKDSLEQDLSNMDKFLEKLGPLSGQGREPPGLPHDPEGMRQQLQEELAEVRARLEPYMAEAHQQVGWNLEGLRRQLKPYTVELMEQVARRVQELQEQLRVVGEGTKAQLLGGVDEARGLLQELQTRVVQHTGRVRELFHPYAQRLVTGIGRHVQELHRSVAPHAAASSARLSRCVQTLSRKLTLKAEALHARIQQNLDQLLEELSAFASAGAGGAEEGANSGPQMLSQEVRQRLQAFRHDTFVQIADFTRAIDQETEEVQLQLAPPPPGHSAFAPEFLQADSSEARSKLQARLEDLWEDINDSLHDRGLSHLEEP</sequence>
<evidence type="ECO:0000250" key="1">
    <source>
        <dbReference type="UniProtKB" id="Q6Q788"/>
    </source>
</evidence>
<evidence type="ECO:0000250" key="2">
    <source>
        <dbReference type="UniProtKB" id="Q8C7G5"/>
    </source>
</evidence>
<evidence type="ECO:0000255" key="3"/>
<evidence type="ECO:0000256" key="4">
    <source>
        <dbReference type="SAM" id="MobiDB-lite"/>
    </source>
</evidence>
<evidence type="ECO:0000305" key="5"/>
<organism>
    <name type="scientific">Leptonychotes weddellii</name>
    <name type="common">Weddell seal</name>
    <name type="synonym">Otaria weddellii</name>
    <dbReference type="NCBI Taxonomy" id="9713"/>
    <lineage>
        <taxon>Eukaryota</taxon>
        <taxon>Metazoa</taxon>
        <taxon>Chordata</taxon>
        <taxon>Craniata</taxon>
        <taxon>Vertebrata</taxon>
        <taxon>Euteleostomi</taxon>
        <taxon>Mammalia</taxon>
        <taxon>Eutheria</taxon>
        <taxon>Laurasiatheria</taxon>
        <taxon>Carnivora</taxon>
        <taxon>Caniformia</taxon>
        <taxon>Pinnipedia</taxon>
        <taxon>Phocidae</taxon>
        <taxon>Monachinae</taxon>
        <taxon>Lobodontini</taxon>
        <taxon>Leptonychotes</taxon>
    </lineage>
</organism>
<comment type="function">
    <text evidence="1 2">Minor apolipoprotein mainly associated with HDL and to a lesser extent with VLDL. May also be associated with chylomicrons (By similarity). Important determinant of plasma triglyceride (TG) levels by both being a potent stimulator of apo-CII lipoprotein lipase (LPL) TG hydrolysis and an inhibitor of the hepatic VLDL-TG production rate (without affecting the VLDL-apoB production rate) (By similarity). Activates poorly lecithin:cholesterol acyltransferase (LCAT) and does not enhance efflux of cholesterol from macrophages (By similarity). Binds heparin (By similarity).</text>
</comment>
<comment type="subunit">
    <text evidence="1">Interacts with GPIHBP1 (By similarity). Interacts with SORL1; this interaction leads to APOA5 internalization and sorting either to lysosomes and degradation, or to the trans-Golgi network (By similarity).</text>
</comment>
<comment type="subcellular location">
    <subcellularLocation>
        <location evidence="1">Secreted</location>
    </subcellularLocation>
    <subcellularLocation>
        <location evidence="1">Early endosome</location>
    </subcellularLocation>
    <subcellularLocation>
        <location evidence="1">Late endosome</location>
    </subcellularLocation>
    <subcellularLocation>
        <location evidence="1">Golgi apparatus</location>
        <location evidence="1">trans-Golgi network</location>
    </subcellularLocation>
    <text evidence="1">In the presence of SORL1, internalized to early endosomes, sorted in a retrograde fashion to late endosomes, from which a portion is sent to lysosomes and degradation, another portion is sorted to the trans-Golgi network.</text>
</comment>
<comment type="PTM">
    <text evidence="1">Phosphorylated by FAM20C in the extracellular medium.</text>
</comment>
<comment type="similarity">
    <text evidence="5">Belongs to the apolipoprotein A1/A4/E family.</text>
</comment>
<gene>
    <name type="primary">APOA5</name>
</gene>
<dbReference type="EMBL" id="APMU01000000">
    <property type="status" value="NOT_ANNOTATED_CDS"/>
    <property type="molecule type" value="Genomic_DNA"/>
</dbReference>
<dbReference type="RefSeq" id="XP_006743518.1">
    <property type="nucleotide sequence ID" value="XM_006743455.1"/>
</dbReference>
<dbReference type="RefSeq" id="XP_030895145.1">
    <property type="nucleotide sequence ID" value="XM_031039285.1"/>
</dbReference>
<dbReference type="SMR" id="P0DTS6"/>
<dbReference type="STRING" id="9713.P0DTS6"/>
<dbReference type="GeneID" id="102733108"/>
<dbReference type="OrthoDB" id="9886755at2759"/>
<dbReference type="Proteomes" id="UP000245341">
    <property type="component" value="Unplaced"/>
</dbReference>
<dbReference type="GO" id="GO:0042627">
    <property type="term" value="C:chylomicron"/>
    <property type="evidence" value="ECO:0007669"/>
    <property type="project" value="UniProtKB-KW"/>
</dbReference>
<dbReference type="GO" id="GO:0005769">
    <property type="term" value="C:early endosome"/>
    <property type="evidence" value="ECO:0007669"/>
    <property type="project" value="UniProtKB-SubCell"/>
</dbReference>
<dbReference type="GO" id="GO:1903561">
    <property type="term" value="C:extracellular vesicle"/>
    <property type="evidence" value="ECO:0007669"/>
    <property type="project" value="TreeGrafter"/>
</dbReference>
<dbReference type="GO" id="GO:0005794">
    <property type="term" value="C:Golgi apparatus"/>
    <property type="evidence" value="ECO:0007669"/>
    <property type="project" value="UniProtKB-SubCell"/>
</dbReference>
<dbReference type="GO" id="GO:0034364">
    <property type="term" value="C:high-density lipoprotein particle"/>
    <property type="evidence" value="ECO:0007669"/>
    <property type="project" value="UniProtKB-KW"/>
</dbReference>
<dbReference type="GO" id="GO:0005770">
    <property type="term" value="C:late endosome"/>
    <property type="evidence" value="ECO:0007669"/>
    <property type="project" value="UniProtKB-SubCell"/>
</dbReference>
<dbReference type="GO" id="GO:0034361">
    <property type="term" value="C:very-low-density lipoprotein particle"/>
    <property type="evidence" value="ECO:0007669"/>
    <property type="project" value="UniProtKB-KW"/>
</dbReference>
<dbReference type="GO" id="GO:0120020">
    <property type="term" value="F:cholesterol transfer activity"/>
    <property type="evidence" value="ECO:0007669"/>
    <property type="project" value="TreeGrafter"/>
</dbReference>
<dbReference type="GO" id="GO:0060228">
    <property type="term" value="F:phosphatidylcholine-sterol O-acyltransferase activator activity"/>
    <property type="evidence" value="ECO:0007669"/>
    <property type="project" value="TreeGrafter"/>
</dbReference>
<dbReference type="GO" id="GO:0005543">
    <property type="term" value="F:phospholipid binding"/>
    <property type="evidence" value="ECO:0007669"/>
    <property type="project" value="TreeGrafter"/>
</dbReference>
<dbReference type="GO" id="GO:0055090">
    <property type="term" value="P:acylglycerol homeostasis"/>
    <property type="evidence" value="ECO:0007669"/>
    <property type="project" value="TreeGrafter"/>
</dbReference>
<dbReference type="GO" id="GO:0033344">
    <property type="term" value="P:cholesterol efflux"/>
    <property type="evidence" value="ECO:0007669"/>
    <property type="project" value="TreeGrafter"/>
</dbReference>
<dbReference type="GO" id="GO:0008203">
    <property type="term" value="P:cholesterol metabolic process"/>
    <property type="evidence" value="ECO:0007669"/>
    <property type="project" value="TreeGrafter"/>
</dbReference>
<dbReference type="GO" id="GO:0042157">
    <property type="term" value="P:lipoprotein metabolic process"/>
    <property type="evidence" value="ECO:0007669"/>
    <property type="project" value="InterPro"/>
</dbReference>
<dbReference type="GO" id="GO:0033700">
    <property type="term" value="P:phospholipid efflux"/>
    <property type="evidence" value="ECO:0007669"/>
    <property type="project" value="TreeGrafter"/>
</dbReference>
<dbReference type="FunFam" id="1.20.120.20:FF:000006">
    <property type="entry name" value="Apolipoprotein A-V"/>
    <property type="match status" value="1"/>
</dbReference>
<dbReference type="FunFam" id="1.20.120.20:FF:000009">
    <property type="entry name" value="apolipoprotein A-V"/>
    <property type="match status" value="1"/>
</dbReference>
<dbReference type="Gene3D" id="1.20.120.20">
    <property type="entry name" value="Apolipoprotein"/>
    <property type="match status" value="2"/>
</dbReference>
<dbReference type="InterPro" id="IPR000074">
    <property type="entry name" value="ApoA_E"/>
</dbReference>
<dbReference type="InterPro" id="IPR050163">
    <property type="entry name" value="Apolipoprotein_A1/A4/E"/>
</dbReference>
<dbReference type="PANTHER" id="PTHR18976">
    <property type="entry name" value="APOLIPOPROTEIN"/>
    <property type="match status" value="1"/>
</dbReference>
<dbReference type="PANTHER" id="PTHR18976:SF13">
    <property type="entry name" value="APOLIPOPROTEIN A-V"/>
    <property type="match status" value="1"/>
</dbReference>
<dbReference type="Pfam" id="PF01442">
    <property type="entry name" value="Apolipoprotein"/>
    <property type="match status" value="1"/>
</dbReference>
<dbReference type="SUPFAM" id="SSF58113">
    <property type="entry name" value="Apolipoprotein A-I"/>
    <property type="match status" value="1"/>
</dbReference>
<name>APOA5_LEPWE</name>